<sequence length="618" mass="66393">MAKVIGIDLGTTNSCVSVMEGGNPVVITNSEGARTTPSVVSFQDNGERLVGQIAKRQAITNPHKTIMSIKRYMGTDHKETIDGKEYTPQELSAIILQKLKADAEAYLGGTVTQAVITVPAYFNDSQRQATKDAGRIAGLEVLRIINEPTAASLAYGLDKMDTNQKILVYDLGGGTFDVSILELGDGVFEVKSTNGNTKLGGDDFDQRIIDHIAETFKKDSGIDLRTDKMALQRLKEAAEKAKIELSSSTQTNINLPFITADATGPKHIDMNLTRAKFNELTQDLVEGTLTPMKKALQDAEMSIGEIDKVILVGGSTRIPAVQDAVKNFTGKEPSKDVNPDECVAMGAAVQAGVLTGDVKDVLLLDVTPLTLGIETLGGVATPLIERNTTIPTRKSQVFSTAADGQTSVEIHVVQGERQMAADNKTLGRFTLSGIAPAPRGIPQIEVTFDIDANGIVNVSAKDKGTGKEANITITASTNLSDDEVEKAVNDAKKFEEEDKKRKESVEVKNNAEQIFYQTEKTLNELGDKVSAEDKATIEEKLNALKGVKDGEDIEAIKKATEDLTQAFYQISSKIYQDAGAPGAEGFDSNMAGEANAGQNANNDDNVVDADYKVEDDEK</sequence>
<protein>
    <recommendedName>
        <fullName evidence="1">Chaperone protein DnaK</fullName>
    </recommendedName>
    <alternativeName>
        <fullName evidence="1">HSP70</fullName>
    </alternativeName>
    <alternativeName>
        <fullName evidence="1">Heat shock 70 kDa protein</fullName>
    </alternativeName>
    <alternativeName>
        <fullName evidence="1">Heat shock protein 70</fullName>
    </alternativeName>
</protein>
<reference key="1">
    <citation type="journal article" date="2003" name="Proc. Natl. Acad. Sci. U.S.A.">
        <title>The genome sequence of Clostridium tetani, the causative agent of tetanus disease.</title>
        <authorList>
            <person name="Brueggemann H."/>
            <person name="Baeumer S."/>
            <person name="Fricke W.F."/>
            <person name="Wiezer A."/>
            <person name="Liesegang H."/>
            <person name="Decker I."/>
            <person name="Herzberg C."/>
            <person name="Martinez-Arias R."/>
            <person name="Merkl R."/>
            <person name="Henne A."/>
            <person name="Gottschalk G."/>
        </authorList>
    </citation>
    <scope>NUCLEOTIDE SEQUENCE [LARGE SCALE GENOMIC DNA]</scope>
    <source>
        <strain>Massachusetts / E88</strain>
    </source>
</reference>
<organism>
    <name type="scientific">Clostridium tetani (strain Massachusetts / E88)</name>
    <dbReference type="NCBI Taxonomy" id="212717"/>
    <lineage>
        <taxon>Bacteria</taxon>
        <taxon>Bacillati</taxon>
        <taxon>Bacillota</taxon>
        <taxon>Clostridia</taxon>
        <taxon>Eubacteriales</taxon>
        <taxon>Clostridiaceae</taxon>
        <taxon>Clostridium</taxon>
    </lineage>
</organism>
<dbReference type="EMBL" id="AE015927">
    <property type="protein sequence ID" value="AAO36534.1"/>
    <property type="molecule type" value="Genomic_DNA"/>
</dbReference>
<dbReference type="RefSeq" id="WP_011100192.1">
    <property type="nucleotide sequence ID" value="NC_004557.1"/>
</dbReference>
<dbReference type="SMR" id="Q892R0"/>
<dbReference type="STRING" id="212717.CTC_02031"/>
<dbReference type="GeneID" id="24252800"/>
<dbReference type="KEGG" id="ctc:CTC_02031"/>
<dbReference type="HOGENOM" id="CLU_005965_2_4_9"/>
<dbReference type="OrthoDB" id="9766019at2"/>
<dbReference type="Proteomes" id="UP000001412">
    <property type="component" value="Chromosome"/>
</dbReference>
<dbReference type="GO" id="GO:0005524">
    <property type="term" value="F:ATP binding"/>
    <property type="evidence" value="ECO:0007669"/>
    <property type="project" value="UniProtKB-UniRule"/>
</dbReference>
<dbReference type="GO" id="GO:0140662">
    <property type="term" value="F:ATP-dependent protein folding chaperone"/>
    <property type="evidence" value="ECO:0007669"/>
    <property type="project" value="InterPro"/>
</dbReference>
<dbReference type="GO" id="GO:0051082">
    <property type="term" value="F:unfolded protein binding"/>
    <property type="evidence" value="ECO:0007669"/>
    <property type="project" value="InterPro"/>
</dbReference>
<dbReference type="CDD" id="cd10234">
    <property type="entry name" value="ASKHA_NBD_HSP70_DnaK-like"/>
    <property type="match status" value="1"/>
</dbReference>
<dbReference type="FunFam" id="2.60.34.10:FF:000014">
    <property type="entry name" value="Chaperone protein DnaK HSP70"/>
    <property type="match status" value="1"/>
</dbReference>
<dbReference type="FunFam" id="1.20.1270.10:FF:000001">
    <property type="entry name" value="Molecular chaperone DnaK"/>
    <property type="match status" value="1"/>
</dbReference>
<dbReference type="FunFam" id="3.30.420.40:FF:000071">
    <property type="entry name" value="Molecular chaperone DnaK"/>
    <property type="match status" value="1"/>
</dbReference>
<dbReference type="FunFam" id="3.90.640.10:FF:000003">
    <property type="entry name" value="Molecular chaperone DnaK"/>
    <property type="match status" value="1"/>
</dbReference>
<dbReference type="Gene3D" id="1.20.1270.10">
    <property type="match status" value="1"/>
</dbReference>
<dbReference type="Gene3D" id="3.30.420.40">
    <property type="match status" value="2"/>
</dbReference>
<dbReference type="Gene3D" id="3.90.640.10">
    <property type="entry name" value="Actin, Chain A, domain 4"/>
    <property type="match status" value="1"/>
</dbReference>
<dbReference type="Gene3D" id="2.60.34.10">
    <property type="entry name" value="Substrate Binding Domain Of DNAk, Chain A, domain 1"/>
    <property type="match status" value="1"/>
</dbReference>
<dbReference type="HAMAP" id="MF_00332">
    <property type="entry name" value="DnaK"/>
    <property type="match status" value="1"/>
</dbReference>
<dbReference type="InterPro" id="IPR043129">
    <property type="entry name" value="ATPase_NBD"/>
</dbReference>
<dbReference type="InterPro" id="IPR012725">
    <property type="entry name" value="Chaperone_DnaK"/>
</dbReference>
<dbReference type="InterPro" id="IPR018181">
    <property type="entry name" value="Heat_shock_70_CS"/>
</dbReference>
<dbReference type="InterPro" id="IPR029048">
    <property type="entry name" value="HSP70_C_sf"/>
</dbReference>
<dbReference type="InterPro" id="IPR029047">
    <property type="entry name" value="HSP70_peptide-bd_sf"/>
</dbReference>
<dbReference type="InterPro" id="IPR013126">
    <property type="entry name" value="Hsp_70_fam"/>
</dbReference>
<dbReference type="NCBIfam" id="NF001413">
    <property type="entry name" value="PRK00290.1"/>
    <property type="match status" value="1"/>
</dbReference>
<dbReference type="NCBIfam" id="TIGR02350">
    <property type="entry name" value="prok_dnaK"/>
    <property type="match status" value="1"/>
</dbReference>
<dbReference type="PANTHER" id="PTHR19375">
    <property type="entry name" value="HEAT SHOCK PROTEIN 70KDA"/>
    <property type="match status" value="1"/>
</dbReference>
<dbReference type="Pfam" id="PF00012">
    <property type="entry name" value="HSP70"/>
    <property type="match status" value="2"/>
</dbReference>
<dbReference type="PRINTS" id="PR00301">
    <property type="entry name" value="HEATSHOCK70"/>
</dbReference>
<dbReference type="SUPFAM" id="SSF53067">
    <property type="entry name" value="Actin-like ATPase domain"/>
    <property type="match status" value="2"/>
</dbReference>
<dbReference type="SUPFAM" id="SSF100934">
    <property type="entry name" value="Heat shock protein 70kD (HSP70), C-terminal subdomain"/>
    <property type="match status" value="1"/>
</dbReference>
<dbReference type="SUPFAM" id="SSF100920">
    <property type="entry name" value="Heat shock protein 70kD (HSP70), peptide-binding domain"/>
    <property type="match status" value="1"/>
</dbReference>
<dbReference type="PROSITE" id="PS00297">
    <property type="entry name" value="HSP70_1"/>
    <property type="match status" value="1"/>
</dbReference>
<dbReference type="PROSITE" id="PS00329">
    <property type="entry name" value="HSP70_2"/>
    <property type="match status" value="1"/>
</dbReference>
<dbReference type="PROSITE" id="PS01036">
    <property type="entry name" value="HSP70_3"/>
    <property type="match status" value="1"/>
</dbReference>
<evidence type="ECO:0000255" key="1">
    <source>
        <dbReference type="HAMAP-Rule" id="MF_00332"/>
    </source>
</evidence>
<evidence type="ECO:0000256" key="2">
    <source>
        <dbReference type="SAM" id="MobiDB-lite"/>
    </source>
</evidence>
<comment type="function">
    <text evidence="1">Acts as a chaperone.</text>
</comment>
<comment type="induction">
    <text evidence="1">By stress conditions e.g. heat shock.</text>
</comment>
<comment type="similarity">
    <text evidence="1">Belongs to the heat shock protein 70 family.</text>
</comment>
<feature type="chain" id="PRO_0000078451" description="Chaperone protein DnaK">
    <location>
        <begin position="1"/>
        <end position="618"/>
    </location>
</feature>
<feature type="region of interest" description="Disordered" evidence="2">
    <location>
        <begin position="579"/>
        <end position="618"/>
    </location>
</feature>
<feature type="compositionally biased region" description="Low complexity" evidence="2">
    <location>
        <begin position="591"/>
        <end position="604"/>
    </location>
</feature>
<feature type="modified residue" description="Phosphothreonine; by autocatalysis" evidence="1">
    <location>
        <position position="175"/>
    </location>
</feature>
<name>DNAK_CLOTE</name>
<gene>
    <name evidence="1" type="primary">dnaK</name>
    <name type="ordered locus">CTC_02031</name>
</gene>
<accession>Q892R0</accession>
<proteinExistence type="inferred from homology"/>
<keyword id="KW-0067">ATP-binding</keyword>
<keyword id="KW-0143">Chaperone</keyword>
<keyword id="KW-0547">Nucleotide-binding</keyword>
<keyword id="KW-0597">Phosphoprotein</keyword>
<keyword id="KW-1185">Reference proteome</keyword>
<keyword id="KW-0346">Stress response</keyword>